<protein>
    <recommendedName>
        <fullName>Molybdenum-pterin-binding protein 3</fullName>
    </recommendedName>
    <alternativeName>
        <fullName>Molybdenum-pterin-binding protein III</fullName>
    </alternativeName>
</protein>
<sequence>MSISARNQLKGKVVAVKKGLVTAEVVLEIAGGDKVTSIISLDSIEDLGVKEGTELTAVIKSTDVMILA</sequence>
<organism>
    <name type="scientific">Clostridium pasteurianum</name>
    <dbReference type="NCBI Taxonomy" id="1501"/>
    <lineage>
        <taxon>Bacteria</taxon>
        <taxon>Bacillati</taxon>
        <taxon>Bacillota</taxon>
        <taxon>Clostridia</taxon>
        <taxon>Eubacteriales</taxon>
        <taxon>Clostridiaceae</taxon>
        <taxon>Clostridium</taxon>
    </lineage>
</organism>
<feature type="chain" id="PRO_0000096534" description="Molybdenum-pterin-binding protein 3">
    <location>
        <begin position="1"/>
        <end position="68"/>
    </location>
</feature>
<feature type="domain" description="Mop" evidence="1">
    <location>
        <begin position="2"/>
        <end position="68"/>
    </location>
</feature>
<reference key="1">
    <citation type="journal article" date="1987" name="Gene">
        <title>The molybdenum-pterin binding protein is encoded by a multigene family in Clostridium pasteurianum.</title>
        <authorList>
            <person name="Hinton S.M."/>
            <person name="Slaughter C."/>
            <person name="Eisner W."/>
            <person name="Fisher T."/>
        </authorList>
    </citation>
    <scope>NUCLEOTIDE SEQUENCE [GENOMIC DNA]</scope>
</reference>
<gene>
    <name type="primary">mopIII</name>
</gene>
<dbReference type="EMBL" id="AH000875">
    <property type="protein sequence ID" value="AAA23251.1"/>
    <property type="molecule type" value="Genomic_DNA"/>
</dbReference>
<dbReference type="PIR" id="B29094">
    <property type="entry name" value="B29094"/>
</dbReference>
<dbReference type="RefSeq" id="WP_003447801.1">
    <property type="nucleotide sequence ID" value="NZ_LFYL01000002.1"/>
</dbReference>
<dbReference type="SMR" id="P38366"/>
<dbReference type="OrthoDB" id="122515at2"/>
<dbReference type="GO" id="GO:0015689">
    <property type="term" value="P:molybdate ion transport"/>
    <property type="evidence" value="ECO:0007669"/>
    <property type="project" value="InterPro"/>
</dbReference>
<dbReference type="Gene3D" id="2.40.50.100">
    <property type="match status" value="1"/>
</dbReference>
<dbReference type="InterPro" id="IPR008995">
    <property type="entry name" value="Mo/tungstate-bd_C_term_dom"/>
</dbReference>
<dbReference type="InterPro" id="IPR004606">
    <property type="entry name" value="Mop_domain"/>
</dbReference>
<dbReference type="InterPro" id="IPR005116">
    <property type="entry name" value="Transp-assoc_OB_typ1"/>
</dbReference>
<dbReference type="NCBIfam" id="TIGR00638">
    <property type="entry name" value="Mop"/>
    <property type="match status" value="1"/>
</dbReference>
<dbReference type="Pfam" id="PF03459">
    <property type="entry name" value="TOBE"/>
    <property type="match status" value="1"/>
</dbReference>
<dbReference type="SUPFAM" id="SSF50331">
    <property type="entry name" value="MOP-like"/>
    <property type="match status" value="1"/>
</dbReference>
<dbReference type="PROSITE" id="PS51866">
    <property type="entry name" value="MOP"/>
    <property type="match status" value="1"/>
</dbReference>
<comment type="function">
    <text>Binds one mole of molybdenum per mole of protein and contains a pterin.</text>
</comment>
<name>MOP3_CLOPA</name>
<evidence type="ECO:0000255" key="1">
    <source>
        <dbReference type="PROSITE-ProRule" id="PRU01213"/>
    </source>
</evidence>
<accession>P38366</accession>
<proteinExistence type="predicted"/>
<keyword id="KW-0500">Molybdenum</keyword>